<dbReference type="EC" id="2.1.1.-" evidence="4"/>
<dbReference type="EMBL" id="AHHD01000387">
    <property type="protein sequence ID" value="EKG13728.1"/>
    <property type="molecule type" value="Genomic_DNA"/>
</dbReference>
<dbReference type="SMR" id="K2RGJ8"/>
<dbReference type="VEuPathDB" id="FungiDB:MPH_09194"/>
<dbReference type="eggNOG" id="KOG3178">
    <property type="taxonomic scope" value="Eukaryota"/>
</dbReference>
<dbReference type="HOGENOM" id="CLU_129453_0_0_1"/>
<dbReference type="InParanoid" id="K2RGJ8"/>
<dbReference type="OrthoDB" id="2410195at2759"/>
<dbReference type="UniPathway" id="UPA00213"/>
<dbReference type="Proteomes" id="UP000007129">
    <property type="component" value="Unassembled WGS sequence"/>
</dbReference>
<dbReference type="GO" id="GO:0008168">
    <property type="term" value="F:methyltransferase activity"/>
    <property type="evidence" value="ECO:0007669"/>
    <property type="project" value="UniProtKB-KW"/>
</dbReference>
<dbReference type="GO" id="GO:0032259">
    <property type="term" value="P:methylation"/>
    <property type="evidence" value="ECO:0007669"/>
    <property type="project" value="UniProtKB-KW"/>
</dbReference>
<dbReference type="GO" id="GO:0016114">
    <property type="term" value="P:terpenoid biosynthetic process"/>
    <property type="evidence" value="ECO:0007669"/>
    <property type="project" value="UniProtKB-UniPathway"/>
</dbReference>
<dbReference type="Gene3D" id="3.40.50.150">
    <property type="entry name" value="Vaccinia Virus protein VP39"/>
    <property type="match status" value="1"/>
</dbReference>
<dbReference type="InterPro" id="IPR029063">
    <property type="entry name" value="SAM-dependent_MTases_sf"/>
</dbReference>
<dbReference type="PANTHER" id="PTHR43712:SF4">
    <property type="entry name" value="O-METHYLTRANSFERASE DOMAIN-CONTAINING PROTEIN"/>
    <property type="match status" value="1"/>
</dbReference>
<dbReference type="PANTHER" id="PTHR43712">
    <property type="entry name" value="PUTATIVE (AFU_ORTHOLOGUE AFUA_4G14580)-RELATED"/>
    <property type="match status" value="1"/>
</dbReference>
<dbReference type="SUPFAM" id="SSF53335">
    <property type="entry name" value="S-adenosyl-L-methionine-dependent methyltransferases"/>
    <property type="match status" value="1"/>
</dbReference>
<feature type="chain" id="PRO_0000451555" description="O-methyltransferase dpmpI">
    <location>
        <begin position="1"/>
        <end position="196"/>
    </location>
</feature>
<feature type="region of interest" description="Disordered" evidence="3">
    <location>
        <begin position="166"/>
        <end position="196"/>
    </location>
</feature>
<feature type="compositionally biased region" description="Basic and acidic residues" evidence="3">
    <location>
        <begin position="186"/>
        <end position="196"/>
    </location>
</feature>
<feature type="binding site" evidence="1">
    <location>
        <begin position="127"/>
        <end position="128"/>
    </location>
    <ligand>
        <name>S-adenosyl-L-methionine</name>
        <dbReference type="ChEBI" id="CHEBI:59789"/>
    </ligand>
</feature>
<feature type="binding site" evidence="2">
    <location>
        <position position="152"/>
    </location>
    <ligand>
        <name>S-adenosyl-L-methionine</name>
        <dbReference type="ChEBI" id="CHEBI:59789"/>
    </ligand>
</feature>
<feature type="binding site" evidence="1">
    <location>
        <begin position="174"/>
        <end position="175"/>
    </location>
    <ligand>
        <name>S-adenosyl-L-methionine</name>
        <dbReference type="ChEBI" id="CHEBI:59789"/>
    </ligand>
</feature>
<accession>K2RGJ8</accession>
<reference key="1">
    <citation type="journal article" date="2012" name="BMC Genomics">
        <title>Tools to kill: Genome of one of the most destructive plant pathogenic fungi Macrophomina phaseolina.</title>
        <authorList>
            <person name="Islam M.S."/>
            <person name="Haque M.S."/>
            <person name="Islam M.M."/>
            <person name="Emdad E.M."/>
            <person name="Halim A."/>
            <person name="Hossen Q.M.M."/>
            <person name="Hossain M.Z."/>
            <person name="Ahmed B."/>
            <person name="Rahim S."/>
            <person name="Rahman M.S."/>
            <person name="Alam M.M."/>
            <person name="Hou S."/>
            <person name="Wan X."/>
            <person name="Saito J.A."/>
            <person name="Alam M."/>
        </authorList>
    </citation>
    <scope>NUCLEOTIDE SEQUENCE [LARGE SCALE GENOMIC DNA]</scope>
    <source>
        <strain>MS6</strain>
    </source>
</reference>
<reference key="2">
    <citation type="journal article" date="2020" name="Nat. Commun.">
        <title>Synthetic biology based construction of biological activity-related library of fungal decalin-containing diterpenoid pyrones.</title>
        <authorList>
            <person name="Tsukada K."/>
            <person name="Shinki S."/>
            <person name="Kaneko A."/>
            <person name="Murakami K."/>
            <person name="Irie K."/>
            <person name="Murai M."/>
            <person name="Miyoshi H."/>
            <person name="Dan S."/>
            <person name="Kawaji K."/>
            <person name="Hayashi H."/>
            <person name="Kodama E.N."/>
            <person name="Hori A."/>
            <person name="Salim E."/>
            <person name="Kuraishi T."/>
            <person name="Hirata N."/>
            <person name="Kanda Y."/>
            <person name="Asai T."/>
        </authorList>
    </citation>
    <scope>FUNCTION</scope>
    <scope>CATALYTIC ACTIVITY</scope>
    <scope>PATHWAY</scope>
    <scope>BIOTECHNOLOGY</scope>
</reference>
<sequence length="196" mass="22191">MVAETGTGLFSAHKITEELASTSLDSGVHLLFDIHDRTFQALPDFLAEHRYQEVNDIRNTVFQKAFDTNLSIYEYLVHHPQLQAHMQDAMKLHQPEGDWLSVFPADEIVGNQQTAPDPARVLFVDIGGGMGQQCIRFRERYPDLAGRVILQDIPQTINRVPKPMPNGIEAVPHSFEDPQPIKSKSPRLDNLARERL</sequence>
<proteinExistence type="evidence at protein level"/>
<gene>
    <name evidence="5" type="primary">dpmpI</name>
    <name type="ORF">MPH_09194</name>
</gene>
<keyword id="KW-0489">Methyltransferase</keyword>
<keyword id="KW-1185">Reference proteome</keyword>
<keyword id="KW-0808">Transferase</keyword>
<protein>
    <recommendedName>
        <fullName evidence="5">O-methyltransferase dpmpI</fullName>
        <ecNumber evidence="4">2.1.1.-</ecNumber>
    </recommendedName>
    <alternativeName>
        <fullName evidence="5">Diterpenoid pyrone biosynthesis cluster protein I</fullName>
    </alternativeName>
</protein>
<name>DPMPI_MACPH</name>
<comment type="function">
    <text evidence="4 7">O-methyltransferase; part of the gene cluster that mediates the biosynthesis of diterpenoid pyrones (PubMed:32286350). The first step of the pathway is the synthesis of the alpha-pyrone moiety by the polyketide synthase dpmpA via condensation of one acetyl-CoA starter unit with 3 malonyl-CoA units and 2 methylations (Probable). The alpha-pyrone is then combined with geranylgeranyl pyrophosphate (GGPP) formed by the GGPP synthase dpmpD through the action of the prenyltransferase dpmpC to yield a linear alpha-pyrone diterpenoid (Probable). Subsequent steps in the diterpenoid pyrone biosynthetic pathway involve the decalin core formation, which is initiated by the epoxidation of the C10-C11 olefin by the FAD-dependent oxidoreductase dpmpE, and is followed by a cyclization cascade catalyzed by the terpene cyclase dpmpB (Probable). The short chain dehydrogenase/reductase dpmpG then oxidizes the 8S hydroxy group to a ketone and the short chain dehydrogenase/reductase dpmpH reduces the ketone to the 8R hydroxy group to yield higginsianin B (PubMed:32286350). Higginsianin B is further methylated by the methyltransferase dpmpI to produce the intermediate named FDDP B (PubMed:32286350). The cytochrome P450 monooxygenase dpmpJ then oxidizes the C-26 methyl to primary alcohol, producing the final diterpenoid pyrone with a C-26 primary alcohol on the gamma-pyrone moiety named FDDP C (PubMed:32286350).</text>
</comment>
<comment type="pathway">
    <text evidence="4">Secondary metabolite biosynthesis; terpenoid biosynthesis.</text>
</comment>
<comment type="biotechnology">
    <text evidence="4">Diterpenoid pyrones display various biological activities and FDDP C shows anti-cancer and anti-HIV activities (PubMed:32286350). FDDP C also shows inhibitory activity of 42-mer-amyloid beta aggregation that is involved in the pathogenesis of Alzheimer's disease (PubMed:32286350).</text>
</comment>
<comment type="similarity">
    <text evidence="6">Belongs to the class I-like SAM-binding methyltransferase superfamily. Cation-independent O-methyltransferase family.</text>
</comment>
<evidence type="ECO:0000250" key="1">
    <source>
        <dbReference type="UniProtKB" id="O04385"/>
    </source>
</evidence>
<evidence type="ECO:0000255" key="2">
    <source>
        <dbReference type="PROSITE-ProRule" id="PRU01020"/>
    </source>
</evidence>
<evidence type="ECO:0000256" key="3">
    <source>
        <dbReference type="SAM" id="MobiDB-lite"/>
    </source>
</evidence>
<evidence type="ECO:0000269" key="4">
    <source>
    </source>
</evidence>
<evidence type="ECO:0000303" key="5">
    <source>
    </source>
</evidence>
<evidence type="ECO:0000305" key="6"/>
<evidence type="ECO:0000305" key="7">
    <source>
    </source>
</evidence>
<organism>
    <name type="scientific">Macrophomina phaseolina (strain MS6)</name>
    <name type="common">Charcoal rot fungus</name>
    <dbReference type="NCBI Taxonomy" id="1126212"/>
    <lineage>
        <taxon>Eukaryota</taxon>
        <taxon>Fungi</taxon>
        <taxon>Dikarya</taxon>
        <taxon>Ascomycota</taxon>
        <taxon>Pezizomycotina</taxon>
        <taxon>Dothideomycetes</taxon>
        <taxon>Dothideomycetes incertae sedis</taxon>
        <taxon>Botryosphaeriales</taxon>
        <taxon>Botryosphaeriaceae</taxon>
        <taxon>Macrophomina</taxon>
    </lineage>
</organism>